<name>OOEP_MOUSE</name>
<evidence type="ECO:0000250" key="1">
    <source>
        <dbReference type="UniProtKB" id="A6NGQ2"/>
    </source>
</evidence>
<evidence type="ECO:0000269" key="2">
    <source>
    </source>
</evidence>
<evidence type="ECO:0000269" key="3">
    <source>
    </source>
</evidence>
<evidence type="ECO:0000269" key="4">
    <source>
    </source>
</evidence>
<evidence type="ECO:0000269" key="5">
    <source>
    </source>
</evidence>
<evidence type="ECO:0000269" key="6">
    <source>
    </source>
</evidence>
<evidence type="ECO:0000269" key="7">
    <source>
    </source>
</evidence>
<evidence type="ECO:0000269" key="8">
    <source>
    </source>
</evidence>
<evidence type="ECO:0000269" key="9">
    <source>
    </source>
</evidence>
<evidence type="ECO:0000303" key="10">
    <source>
    </source>
</evidence>
<evidence type="ECO:0000303" key="11">
    <source>
    </source>
</evidence>
<evidence type="ECO:0000303" key="12">
    <source ref="1"/>
</evidence>
<evidence type="ECO:0000303" key="13">
    <source ref="2"/>
</evidence>
<evidence type="ECO:0000305" key="14"/>
<evidence type="ECO:0000312" key="15">
    <source>
        <dbReference type="MGI" id="MGI:1915218"/>
    </source>
</evidence>
<evidence type="ECO:0007744" key="16">
    <source>
        <dbReference type="PDB" id="8H93"/>
    </source>
</evidence>
<evidence type="ECO:0007744" key="17">
    <source>
        <dbReference type="PDB" id="8H94"/>
    </source>
</evidence>
<evidence type="ECO:0007744" key="18">
    <source>
        <dbReference type="PDB" id="8H95"/>
    </source>
</evidence>
<evidence type="ECO:0007744" key="19">
    <source>
        <dbReference type="PDB" id="8H96"/>
    </source>
</evidence>
<evidence type="ECO:0007829" key="20">
    <source>
        <dbReference type="PDB" id="8H93"/>
    </source>
</evidence>
<evidence type="ECO:0007829" key="21">
    <source>
        <dbReference type="PDB" id="8H94"/>
    </source>
</evidence>
<evidence type="ECO:0007829" key="22">
    <source>
        <dbReference type="PDB" id="8H96"/>
    </source>
</evidence>
<feature type="chain" id="PRO_0000328803" description="Oocyte-expressed protein homolog">
    <location>
        <begin position="1"/>
        <end position="164"/>
    </location>
</feature>
<feature type="domain" description="KH; atypical">
    <location>
        <begin position="44"/>
        <end position="105"/>
    </location>
</feature>
<feature type="mutagenesis site" description="Impaired formation of the subcortical maternal complex (SCMC)." evidence="9">
    <original>R</original>
    <variation>W</variation>
    <variation>P</variation>
    <variation>G</variation>
    <location>
        <position position="32"/>
    </location>
</feature>
<feature type="strand" evidence="22">
    <location>
        <begin position="28"/>
        <end position="32"/>
    </location>
</feature>
<feature type="strand" evidence="20">
    <location>
        <begin position="34"/>
        <end position="36"/>
    </location>
</feature>
<feature type="helix" evidence="22">
    <location>
        <begin position="38"/>
        <end position="40"/>
    </location>
</feature>
<feature type="strand" evidence="21">
    <location>
        <begin position="41"/>
        <end position="43"/>
    </location>
</feature>
<feature type="strand" evidence="22">
    <location>
        <begin position="45"/>
        <end position="50"/>
    </location>
</feature>
<feature type="helix" evidence="22">
    <location>
        <begin position="51"/>
        <end position="57"/>
    </location>
</feature>
<feature type="helix" evidence="22">
    <location>
        <begin position="63"/>
        <end position="72"/>
    </location>
</feature>
<feature type="strand" evidence="22">
    <location>
        <begin position="75"/>
        <end position="79"/>
    </location>
</feature>
<feature type="strand" evidence="22">
    <location>
        <begin position="82"/>
        <end position="93"/>
    </location>
</feature>
<feature type="helix" evidence="22">
    <location>
        <begin position="95"/>
        <end position="113"/>
    </location>
</feature>
<protein>
    <recommendedName>
        <fullName evidence="14">Oocyte-expressed protein homolog</fullName>
    </recommendedName>
    <alternativeName>
        <fullName evidence="10">Factor located in oocytes permitting embryonic development</fullName>
        <shortName evidence="10">Floped</shortName>
    </alternativeName>
    <alternativeName>
        <fullName evidence="12">Oocyte- and embryo-specific protein 19</fullName>
        <shortName evidence="12">mOEP19</shortName>
    </alternativeName>
    <alternativeName>
        <fullName evidence="13">STAT3 downstream gene and differentiation regulator</fullName>
    </alternativeName>
</protein>
<organism>
    <name type="scientific">Mus musculus</name>
    <name type="common">Mouse</name>
    <dbReference type="NCBI Taxonomy" id="10090"/>
    <lineage>
        <taxon>Eukaryota</taxon>
        <taxon>Metazoa</taxon>
        <taxon>Chordata</taxon>
        <taxon>Craniata</taxon>
        <taxon>Vertebrata</taxon>
        <taxon>Euteleostomi</taxon>
        <taxon>Mammalia</taxon>
        <taxon>Eutheria</taxon>
        <taxon>Euarchontoglires</taxon>
        <taxon>Glires</taxon>
        <taxon>Rodentia</taxon>
        <taxon>Myomorpha</taxon>
        <taxon>Muroidea</taxon>
        <taxon>Muridae</taxon>
        <taxon>Murinae</taxon>
        <taxon>Mus</taxon>
        <taxon>Mus</taxon>
    </lineage>
</organism>
<keyword id="KW-0002">3D-structure</keyword>
<keyword id="KW-0963">Cytoplasm</keyword>
<keyword id="KW-0539">Nucleus</keyword>
<keyword id="KW-1185">Reference proteome</keyword>
<sequence length="164" mass="18460">MASHTADADAKPDSDSQKLLNVLPVSLRLRTRPWWFPIQEVSNPLVLYMEAWVAERVIGTDQAEISEIEWMCQALLTVDSVNSGNLAEITIFGQPSAQTRMKNILLNMAAWHKENELQRAVKVKEVEEFLKIRASSILSKLSKKGLKLAGFPLPLEGRETQMES</sequence>
<dbReference type="EMBL" id="DQ238107">
    <property type="protein sequence ID" value="ABB30176.1"/>
    <property type="molecule type" value="mRNA"/>
</dbReference>
<dbReference type="EMBL" id="AB283026">
    <property type="protein sequence ID" value="BAF76743.1"/>
    <property type="molecule type" value="mRNA"/>
</dbReference>
<dbReference type="EMBL" id="AK010809">
    <property type="protein sequence ID" value="BAB27195.1"/>
    <property type="molecule type" value="mRNA"/>
</dbReference>
<dbReference type="EMBL" id="AK133554">
    <property type="protein sequence ID" value="BAE21721.1"/>
    <property type="molecule type" value="mRNA"/>
</dbReference>
<dbReference type="EMBL" id="AK135950">
    <property type="protein sequence ID" value="BAE22739.1"/>
    <property type="molecule type" value="mRNA"/>
</dbReference>
<dbReference type="EMBL" id="AK136199">
    <property type="protein sequence ID" value="BAE22871.1"/>
    <property type="molecule type" value="mRNA"/>
</dbReference>
<dbReference type="EMBL" id="AK145510">
    <property type="protein sequence ID" value="BAE26478.1"/>
    <property type="molecule type" value="mRNA"/>
</dbReference>
<dbReference type="EMBL" id="BC062245">
    <property type="protein sequence ID" value="AAH62245.1"/>
    <property type="molecule type" value="mRNA"/>
</dbReference>
<dbReference type="CCDS" id="CCDS23361.1"/>
<dbReference type="RefSeq" id="NP_080756.1">
    <property type="nucleotide sequence ID" value="NM_026480.3"/>
</dbReference>
<dbReference type="PDB" id="8H93">
    <property type="method" value="EM"/>
    <property type="resolution" value="3.01 A"/>
    <property type="chains" value="C/F=1-164"/>
</dbReference>
<dbReference type="PDB" id="8H94">
    <property type="method" value="EM"/>
    <property type="resolution" value="2.90 A"/>
    <property type="chains" value="C=1-164"/>
</dbReference>
<dbReference type="PDB" id="8H95">
    <property type="method" value="EM"/>
    <property type="resolution" value="3.38 A"/>
    <property type="chains" value="C=1-164"/>
</dbReference>
<dbReference type="PDB" id="8H96">
    <property type="method" value="EM"/>
    <property type="resolution" value="2.78 A"/>
    <property type="chains" value="C=1-164"/>
</dbReference>
<dbReference type="PDB" id="8XI3">
    <property type="method" value="EM"/>
    <property type="resolution" value="3.00 A"/>
    <property type="chains" value="C=1-164"/>
</dbReference>
<dbReference type="PDBsum" id="8H93"/>
<dbReference type="PDBsum" id="8H94"/>
<dbReference type="PDBsum" id="8H95"/>
<dbReference type="PDBsum" id="8H96"/>
<dbReference type="PDBsum" id="8XI3"/>
<dbReference type="EMDB" id="EMD-34552"/>
<dbReference type="EMDB" id="EMD-34554"/>
<dbReference type="EMDB" id="EMD-34555"/>
<dbReference type="EMDB" id="EMD-34556"/>
<dbReference type="EMDB" id="EMD-38369"/>
<dbReference type="SMR" id="Q9CWE6"/>
<dbReference type="BioGRID" id="212570">
    <property type="interactions" value="4"/>
</dbReference>
<dbReference type="CORUM" id="Q9CWE6"/>
<dbReference type="FunCoup" id="Q9CWE6">
    <property type="interactions" value="20"/>
</dbReference>
<dbReference type="IntAct" id="Q9CWE6">
    <property type="interactions" value="3"/>
</dbReference>
<dbReference type="STRING" id="10090.ENSMUSP00000034900"/>
<dbReference type="REPRODUCTION-2DPAGE" id="Q9CWE6"/>
<dbReference type="PaxDb" id="10090-ENSMUSP00000034900"/>
<dbReference type="ProteomicsDB" id="293517"/>
<dbReference type="Antibodypedia" id="65863">
    <property type="antibodies" value="9 antibodies from 7 providers"/>
</dbReference>
<dbReference type="Ensembl" id="ENSMUST00000034900.8">
    <property type="protein sequence ID" value="ENSMUSP00000034900.8"/>
    <property type="gene ID" value="ENSMUSG00000032346.8"/>
</dbReference>
<dbReference type="GeneID" id="67968"/>
<dbReference type="KEGG" id="mmu:67968"/>
<dbReference type="UCSC" id="uc009quh.2">
    <property type="organism name" value="mouse"/>
</dbReference>
<dbReference type="AGR" id="MGI:1915218"/>
<dbReference type="CTD" id="441161"/>
<dbReference type="MGI" id="MGI:1915218">
    <property type="gene designation" value="Ooep"/>
</dbReference>
<dbReference type="VEuPathDB" id="HostDB:ENSMUSG00000032346"/>
<dbReference type="eggNOG" id="ENOG502RU0M">
    <property type="taxonomic scope" value="Eukaryota"/>
</dbReference>
<dbReference type="GeneTree" id="ENSGT00940000162097"/>
<dbReference type="HOGENOM" id="CLU_146793_0_0_1"/>
<dbReference type="InParanoid" id="Q9CWE6"/>
<dbReference type="OMA" id="PWIRTRP"/>
<dbReference type="OrthoDB" id="9533079at2759"/>
<dbReference type="PhylomeDB" id="Q9CWE6"/>
<dbReference type="TreeFam" id="TF338690"/>
<dbReference type="BioGRID-ORCS" id="67968">
    <property type="hits" value="2 hits in 77 CRISPR screens"/>
</dbReference>
<dbReference type="ChiTaRS" id="Ooep">
    <property type="organism name" value="mouse"/>
</dbReference>
<dbReference type="PRO" id="PR:Q9CWE6"/>
<dbReference type="Proteomes" id="UP000000589">
    <property type="component" value="Chromosome 9"/>
</dbReference>
<dbReference type="RNAct" id="Q9CWE6">
    <property type="molecule type" value="protein"/>
</dbReference>
<dbReference type="Bgee" id="ENSMUSG00000032346">
    <property type="expression patterns" value="Expressed in primary oocyte and 65 other cell types or tissues"/>
</dbReference>
<dbReference type="GO" id="GO:0045177">
    <property type="term" value="C:apical part of cell"/>
    <property type="evidence" value="ECO:0000314"/>
    <property type="project" value="MGI"/>
</dbReference>
<dbReference type="GO" id="GO:0005938">
    <property type="term" value="C:cell cortex"/>
    <property type="evidence" value="ECO:0000314"/>
    <property type="project" value="UniProtKB"/>
</dbReference>
<dbReference type="GO" id="GO:0140095">
    <property type="term" value="C:cytoplasmic lattice"/>
    <property type="evidence" value="ECO:0000314"/>
    <property type="project" value="UniProtKB"/>
</dbReference>
<dbReference type="GO" id="GO:0005634">
    <property type="term" value="C:nucleus"/>
    <property type="evidence" value="ECO:0000314"/>
    <property type="project" value="UniProtKB"/>
</dbReference>
<dbReference type="GO" id="GO:0032991">
    <property type="term" value="C:protein-containing complex"/>
    <property type="evidence" value="ECO:0000314"/>
    <property type="project" value="MGI"/>
</dbReference>
<dbReference type="GO" id="GO:0106333">
    <property type="term" value="C:subcortical maternal complex"/>
    <property type="evidence" value="ECO:0000314"/>
    <property type="project" value="UniProtKB"/>
</dbReference>
<dbReference type="GO" id="GO:0003723">
    <property type="term" value="F:RNA binding"/>
    <property type="evidence" value="ECO:0000314"/>
    <property type="project" value="MGI"/>
</dbReference>
<dbReference type="GO" id="GO:0140094">
    <property type="term" value="F:structural constituent of cytoplasmic lattice"/>
    <property type="evidence" value="ECO:0000314"/>
    <property type="project" value="UniProtKB"/>
</dbReference>
<dbReference type="GO" id="GO:0007015">
    <property type="term" value="P:actin filament organization"/>
    <property type="evidence" value="ECO:0000315"/>
    <property type="project" value="UniProtKB"/>
</dbReference>
<dbReference type="GO" id="GO:0007566">
    <property type="term" value="P:embryo implantation"/>
    <property type="evidence" value="ECO:0000315"/>
    <property type="project" value="MGI"/>
</dbReference>
<dbReference type="GO" id="GO:0009880">
    <property type="term" value="P:embryonic pattern specification"/>
    <property type="evidence" value="ECO:0000314"/>
    <property type="project" value="MGI"/>
</dbReference>
<dbReference type="GO" id="GO:0051293">
    <property type="term" value="P:establishment of spindle localization"/>
    <property type="evidence" value="ECO:0000315"/>
    <property type="project" value="UniProtKB"/>
</dbReference>
<dbReference type="GO" id="GO:0035088">
    <property type="term" value="P:establishment or maintenance of apical/basal cell polarity"/>
    <property type="evidence" value="ECO:0000314"/>
    <property type="project" value="MGI"/>
</dbReference>
<dbReference type="GO" id="GO:0009566">
    <property type="term" value="P:fertilization"/>
    <property type="evidence" value="ECO:0000315"/>
    <property type="project" value="MGI"/>
</dbReference>
<dbReference type="GO" id="GO:0001701">
    <property type="term" value="P:in utero embryonic development"/>
    <property type="evidence" value="ECO:0000315"/>
    <property type="project" value="MGI"/>
</dbReference>
<dbReference type="GO" id="GO:2000781">
    <property type="term" value="P:positive regulation of double-strand break repair"/>
    <property type="evidence" value="ECO:0000315"/>
    <property type="project" value="UniProtKB"/>
</dbReference>
<dbReference type="GO" id="GO:1905168">
    <property type="term" value="P:positive regulation of double-strand break repair via homologous recombination"/>
    <property type="evidence" value="ECO:0000315"/>
    <property type="project" value="UniProtKB"/>
</dbReference>
<dbReference type="GO" id="GO:0045836">
    <property type="term" value="P:positive regulation of meiotic nuclear division"/>
    <property type="evidence" value="ECO:0000315"/>
    <property type="project" value="UniProtKB"/>
</dbReference>
<dbReference type="GO" id="GO:0140089">
    <property type="term" value="P:protein storage"/>
    <property type="evidence" value="ECO:0000314"/>
    <property type="project" value="UniProtKB"/>
</dbReference>
<dbReference type="GO" id="GO:0065003">
    <property type="term" value="P:protein-containing complex assembly"/>
    <property type="evidence" value="ECO:0000315"/>
    <property type="project" value="MGI"/>
</dbReference>
<dbReference type="GO" id="GO:0051302">
    <property type="term" value="P:regulation of cell division"/>
    <property type="evidence" value="ECO:0000315"/>
    <property type="project" value="UniProtKB"/>
</dbReference>
<dbReference type="GO" id="GO:0070201">
    <property type="term" value="P:regulation of establishment of protein localization"/>
    <property type="evidence" value="ECO:0000315"/>
    <property type="project" value="UniProtKB"/>
</dbReference>
<dbReference type="GO" id="GO:0032880">
    <property type="term" value="P:regulation of protein localization"/>
    <property type="evidence" value="ECO:0000315"/>
    <property type="project" value="UniProtKB"/>
</dbReference>
<dbReference type="GO" id="GO:0031297">
    <property type="term" value="P:replication fork processing"/>
    <property type="evidence" value="ECO:0000315"/>
    <property type="project" value="UniProtKB"/>
</dbReference>
<dbReference type="CDD" id="cd12795">
    <property type="entry name" value="FILIA_N_like"/>
    <property type="match status" value="1"/>
</dbReference>
<dbReference type="FunFam" id="3.30.1370.10:FF:000086">
    <property type="entry name" value="Oocyte-expressed protein homolog"/>
    <property type="match status" value="1"/>
</dbReference>
<dbReference type="Gene3D" id="3.30.1370.10">
    <property type="entry name" value="K Homology domain, type 1"/>
    <property type="match status" value="1"/>
</dbReference>
<dbReference type="InterPro" id="IPR036612">
    <property type="entry name" value="KH_dom_type_1_sf"/>
</dbReference>
<dbReference type="InterPro" id="IPR051778">
    <property type="entry name" value="KHDC1"/>
</dbReference>
<dbReference type="InterPro" id="IPR031952">
    <property type="entry name" value="MOEP19_KH-like"/>
</dbReference>
<dbReference type="PANTHER" id="PTHR19447:SF14">
    <property type="entry name" value="OOCYTE-EXPRESSED PROTEIN HOMOLOG"/>
    <property type="match status" value="1"/>
</dbReference>
<dbReference type="PANTHER" id="PTHR19447">
    <property type="entry name" value="OOCYTE-EXPRESSED PROTEIN HOMOLOG-RELATED"/>
    <property type="match status" value="1"/>
</dbReference>
<dbReference type="Pfam" id="PF16005">
    <property type="entry name" value="MOEP19"/>
    <property type="match status" value="1"/>
</dbReference>
<proteinExistence type="evidence at protein level"/>
<gene>
    <name evidence="11 15" type="primary">Ooep</name>
    <name evidence="12" type="synonym">Oep19</name>
    <name evidence="13" type="synonym">Sddr</name>
</gene>
<reference key="1">
    <citation type="submission" date="2005-10" db="EMBL/GenBank/DDBJ databases">
        <title>MOEP19 is mouse oocyte and embryo specific protein that persists in the apical cortex of blastomeres defining cell polarity.</title>
        <authorList>
            <person name="Chertihin O.I."/>
            <person name="Digilio L.C."/>
            <person name="Jha K.N."/>
            <person name="Herr J.C."/>
        </authorList>
    </citation>
    <scope>NUCLEOTIDE SEQUENCE [MRNA]</scope>
    <source>
        <strain>ICR</strain>
        <tissue>Oocyte</tissue>
    </source>
</reference>
<reference key="2">
    <citation type="submission" date="2006-11" db="EMBL/GenBank/DDBJ databases">
        <title>STAT3 downstream gene, Sddr (STAT3 downstream gene and differentiation regulator), inhibits differentiation of ES cells.</title>
        <authorList>
            <person name="Miura M."/>
            <person name="Takao Y."/>
            <person name="Koide H."/>
            <person name="Yokota T."/>
        </authorList>
    </citation>
    <scope>NUCLEOTIDE SEQUENCE [MRNA]</scope>
</reference>
<reference key="3">
    <citation type="journal article" date="2005" name="Science">
        <title>The transcriptional landscape of the mammalian genome.</title>
        <authorList>
            <person name="Carninci P."/>
            <person name="Kasukawa T."/>
            <person name="Katayama S."/>
            <person name="Gough J."/>
            <person name="Frith M.C."/>
            <person name="Maeda N."/>
            <person name="Oyama R."/>
            <person name="Ravasi T."/>
            <person name="Lenhard B."/>
            <person name="Wells C."/>
            <person name="Kodzius R."/>
            <person name="Shimokawa K."/>
            <person name="Bajic V.B."/>
            <person name="Brenner S.E."/>
            <person name="Batalov S."/>
            <person name="Forrest A.R."/>
            <person name="Zavolan M."/>
            <person name="Davis M.J."/>
            <person name="Wilming L.G."/>
            <person name="Aidinis V."/>
            <person name="Allen J.E."/>
            <person name="Ambesi-Impiombato A."/>
            <person name="Apweiler R."/>
            <person name="Aturaliya R.N."/>
            <person name="Bailey T.L."/>
            <person name="Bansal M."/>
            <person name="Baxter L."/>
            <person name="Beisel K.W."/>
            <person name="Bersano T."/>
            <person name="Bono H."/>
            <person name="Chalk A.M."/>
            <person name="Chiu K.P."/>
            <person name="Choudhary V."/>
            <person name="Christoffels A."/>
            <person name="Clutterbuck D.R."/>
            <person name="Crowe M.L."/>
            <person name="Dalla E."/>
            <person name="Dalrymple B.P."/>
            <person name="de Bono B."/>
            <person name="Della Gatta G."/>
            <person name="di Bernardo D."/>
            <person name="Down T."/>
            <person name="Engstrom P."/>
            <person name="Fagiolini M."/>
            <person name="Faulkner G."/>
            <person name="Fletcher C.F."/>
            <person name="Fukushima T."/>
            <person name="Furuno M."/>
            <person name="Futaki S."/>
            <person name="Gariboldi M."/>
            <person name="Georgii-Hemming P."/>
            <person name="Gingeras T.R."/>
            <person name="Gojobori T."/>
            <person name="Green R.E."/>
            <person name="Gustincich S."/>
            <person name="Harbers M."/>
            <person name="Hayashi Y."/>
            <person name="Hensch T.K."/>
            <person name="Hirokawa N."/>
            <person name="Hill D."/>
            <person name="Huminiecki L."/>
            <person name="Iacono M."/>
            <person name="Ikeo K."/>
            <person name="Iwama A."/>
            <person name="Ishikawa T."/>
            <person name="Jakt M."/>
            <person name="Kanapin A."/>
            <person name="Katoh M."/>
            <person name="Kawasawa Y."/>
            <person name="Kelso J."/>
            <person name="Kitamura H."/>
            <person name="Kitano H."/>
            <person name="Kollias G."/>
            <person name="Krishnan S.P."/>
            <person name="Kruger A."/>
            <person name="Kummerfeld S.K."/>
            <person name="Kurochkin I.V."/>
            <person name="Lareau L.F."/>
            <person name="Lazarevic D."/>
            <person name="Lipovich L."/>
            <person name="Liu J."/>
            <person name="Liuni S."/>
            <person name="McWilliam S."/>
            <person name="Madan Babu M."/>
            <person name="Madera M."/>
            <person name="Marchionni L."/>
            <person name="Matsuda H."/>
            <person name="Matsuzawa S."/>
            <person name="Miki H."/>
            <person name="Mignone F."/>
            <person name="Miyake S."/>
            <person name="Morris K."/>
            <person name="Mottagui-Tabar S."/>
            <person name="Mulder N."/>
            <person name="Nakano N."/>
            <person name="Nakauchi H."/>
            <person name="Ng P."/>
            <person name="Nilsson R."/>
            <person name="Nishiguchi S."/>
            <person name="Nishikawa S."/>
            <person name="Nori F."/>
            <person name="Ohara O."/>
            <person name="Okazaki Y."/>
            <person name="Orlando V."/>
            <person name="Pang K.C."/>
            <person name="Pavan W.J."/>
            <person name="Pavesi G."/>
            <person name="Pesole G."/>
            <person name="Petrovsky N."/>
            <person name="Piazza S."/>
            <person name="Reed J."/>
            <person name="Reid J.F."/>
            <person name="Ring B.Z."/>
            <person name="Ringwald M."/>
            <person name="Rost B."/>
            <person name="Ruan Y."/>
            <person name="Salzberg S.L."/>
            <person name="Sandelin A."/>
            <person name="Schneider C."/>
            <person name="Schoenbach C."/>
            <person name="Sekiguchi K."/>
            <person name="Semple C.A."/>
            <person name="Seno S."/>
            <person name="Sessa L."/>
            <person name="Sheng Y."/>
            <person name="Shibata Y."/>
            <person name="Shimada H."/>
            <person name="Shimada K."/>
            <person name="Silva D."/>
            <person name="Sinclair B."/>
            <person name="Sperling S."/>
            <person name="Stupka E."/>
            <person name="Sugiura K."/>
            <person name="Sultana R."/>
            <person name="Takenaka Y."/>
            <person name="Taki K."/>
            <person name="Tammoja K."/>
            <person name="Tan S.L."/>
            <person name="Tang S."/>
            <person name="Taylor M.S."/>
            <person name="Tegner J."/>
            <person name="Teichmann S.A."/>
            <person name="Ueda H.R."/>
            <person name="van Nimwegen E."/>
            <person name="Verardo R."/>
            <person name="Wei C.L."/>
            <person name="Yagi K."/>
            <person name="Yamanishi H."/>
            <person name="Zabarovsky E."/>
            <person name="Zhu S."/>
            <person name="Zimmer A."/>
            <person name="Hide W."/>
            <person name="Bult C."/>
            <person name="Grimmond S.M."/>
            <person name="Teasdale R.D."/>
            <person name="Liu E.T."/>
            <person name="Brusic V."/>
            <person name="Quackenbush J."/>
            <person name="Wahlestedt C."/>
            <person name="Mattick J.S."/>
            <person name="Hume D.A."/>
            <person name="Kai C."/>
            <person name="Sasaki D."/>
            <person name="Tomaru Y."/>
            <person name="Fukuda S."/>
            <person name="Kanamori-Katayama M."/>
            <person name="Suzuki M."/>
            <person name="Aoki J."/>
            <person name="Arakawa T."/>
            <person name="Iida J."/>
            <person name="Imamura K."/>
            <person name="Itoh M."/>
            <person name="Kato T."/>
            <person name="Kawaji H."/>
            <person name="Kawagashira N."/>
            <person name="Kawashima T."/>
            <person name="Kojima M."/>
            <person name="Kondo S."/>
            <person name="Konno H."/>
            <person name="Nakano K."/>
            <person name="Ninomiya N."/>
            <person name="Nishio T."/>
            <person name="Okada M."/>
            <person name="Plessy C."/>
            <person name="Shibata K."/>
            <person name="Shiraki T."/>
            <person name="Suzuki S."/>
            <person name="Tagami M."/>
            <person name="Waki K."/>
            <person name="Watahiki A."/>
            <person name="Okamura-Oho Y."/>
            <person name="Suzuki H."/>
            <person name="Kawai J."/>
            <person name="Hayashizaki Y."/>
        </authorList>
    </citation>
    <scope>NUCLEOTIDE SEQUENCE [LARGE SCALE MRNA]</scope>
    <source>
        <strain>C57BL/6J</strain>
        <tissue>Egg</tissue>
        <tissue>Pituitary</tissue>
    </source>
</reference>
<reference key="4">
    <citation type="journal article" date="2004" name="Genome Res.">
        <title>The status, quality, and expansion of the NIH full-length cDNA project: the Mammalian Gene Collection (MGC).</title>
        <authorList>
            <consortium name="The MGC Project Team"/>
        </authorList>
    </citation>
    <scope>NUCLEOTIDE SEQUENCE [LARGE SCALE MRNA]</scope>
    <source>
        <strain>C57BL/6J</strain>
        <tissue>Thymus</tissue>
    </source>
</reference>
<reference key="5">
    <citation type="journal article" date="2008" name="Dev. Cell">
        <title>A subcortical maternal complex essential for preimplantation mouse embryogenesis.</title>
        <authorList>
            <person name="Li L."/>
            <person name="Baibakov B."/>
            <person name="Dean J."/>
        </authorList>
    </citation>
    <scope>FUNCTION</scope>
    <scope>IDENTIFICATION IN THE SCMC COMPLEX WITH KHDC3; NLRP5 AND TLE6</scope>
    <scope>SUBCELLULAR LOCATION</scope>
    <scope>TISSUE SPECIFICITY</scope>
    <scope>DEVELOPMENTAL STAGE</scope>
    <scope>DISRUPTION PHENOTYPE</scope>
</reference>
<reference key="6">
    <citation type="journal article" date="2014" name="Nat. Commun.">
        <title>The subcortical maternal complex controls symmetric division of mouse zygotes by regulating F-actin dynamics.</title>
        <authorList>
            <person name="Yu X.J."/>
            <person name="Yi Z."/>
            <person name="Gao Z."/>
            <person name="Qin D."/>
            <person name="Zhai Y."/>
            <person name="Chen X."/>
            <person name="Ou-Yang Y."/>
            <person name="Wang Z.B."/>
            <person name="Zheng P."/>
            <person name="Zhu M.S."/>
            <person name="Wang H."/>
            <person name="Sun Q.Y."/>
            <person name="Dean J."/>
            <person name="Li L."/>
        </authorList>
    </citation>
    <scope>FUNCTION</scope>
    <scope>SUBCELLULAR LOCATION</scope>
    <scope>DISRUPTION PHENOTYPE</scope>
</reference>
<reference key="7">
    <citation type="journal article" date="2018" name="J. Mol. Cell Biol.">
        <title>Zbed3 participates in the subcortical maternal complex and regulates the distribution of organelles.</title>
        <authorList>
            <person name="Gao Z."/>
            <person name="Zhang X."/>
            <person name="Yu X."/>
            <person name="Qin D."/>
            <person name="Xiao Y."/>
            <person name="Yu Y."/>
            <person name="Xiang Y."/>
            <person name="Nie X."/>
            <person name="Lu X."/>
            <person name="Liu W."/>
            <person name="Yi Z."/>
            <person name="Li L."/>
        </authorList>
    </citation>
    <scope>IDENTIFICATION IN THE SCMC COMPLEX</scope>
    <scope>DISRUPTION PHENOTYPE</scope>
</reference>
<reference key="8">
    <citation type="journal article" date="2018" name="Cell Res.">
        <title>Mouse embryonic stem cells have increased capacity for replication fork restart driven by the specific Filia-Floped protein complex.</title>
        <authorList>
            <person name="Zhao B."/>
            <person name="Zhang W."/>
            <person name="Cun Y."/>
            <person name="Li J."/>
            <person name="Liu Y."/>
            <person name="Gao J."/>
            <person name="Zhu H."/>
            <person name="Zhou H."/>
            <person name="Zhang R."/>
            <person name="Zheng P."/>
        </authorList>
    </citation>
    <scope>FUNCTION</scope>
    <scope>INTERACTION WITH KHD3C; BLM AND TRIM25</scope>
    <scope>SUBCELLULAR LOCATION</scope>
</reference>
<reference key="9">
    <citation type="journal article" date="2018" name="Dong Wu Xue Yan Jiu">
        <title>Maternal gene Ooep may participate in homologous recombination-mediated DNA double-strand break repair in mouse oocytes.</title>
        <authorList>
            <person name="He D.J."/>
            <person name="Wang L."/>
            <person name="Zhang Z.B."/>
            <person name="Guo K."/>
            <person name="Li J.Z."/>
            <person name="He X.C."/>
            <person name="Cui Q.H."/>
            <person name="Zheng P."/>
        </authorList>
    </citation>
    <scope>FUNCTION</scope>
    <scope>INDUCTION BY ETOPOSIDE</scope>
    <scope>DISRUPTION PHENOTYPE</scope>
</reference>
<reference key="10">
    <citation type="journal article" date="2019" name="Development">
        <title>The subcortical maternal complex protein Nlrp4f is involved in cytoplasmic lattice formation and organelle distribution.</title>
        <authorList>
            <person name="Qin D."/>
            <person name="Gao Z."/>
            <person name="Xiao Y."/>
            <person name="Zhang X."/>
            <person name="Ma H."/>
            <person name="Yu X."/>
            <person name="Nie X."/>
            <person name="Fan N."/>
            <person name="Wang X."/>
            <person name="Ouyang Y."/>
            <person name="Sun Q.Y."/>
            <person name="Yi Z."/>
            <person name="Li L."/>
        </authorList>
    </citation>
    <scope>INTERACTION WITH TLE6 AND NLRP4F</scope>
    <scope>DEVELOPMENTAL STAGE</scope>
</reference>
<reference key="11">
    <citation type="journal article" date="2023" name="Cell">
        <title>Mammalian oocytes store proteins for the early embryo on cytoplasmic lattices.</title>
        <authorList>
            <person name="Jentoft I.M.A."/>
            <person name="Baeuerlein F.J.B."/>
            <person name="Welp L.M."/>
            <person name="Cooper B.H."/>
            <person name="Petrovic A."/>
            <person name="So C."/>
            <person name="Penir S.M."/>
            <person name="Politi A.Z."/>
            <person name="Horokhovskyi Y."/>
            <person name="Takala I."/>
            <person name="Eckel H."/>
            <person name="Moltrecht R."/>
            <person name="Lenart P."/>
            <person name="Cavazza T."/>
            <person name="Liepe J."/>
            <person name="Brose N."/>
            <person name="Urlaub H."/>
            <person name="Fernandez-Busnadiego R."/>
            <person name="Schuh M."/>
        </authorList>
    </citation>
    <scope>FUNCTION</scope>
    <scope>IDENTIFICATION IN THE SCMC COMPLEX</scope>
    <scope>SUBCELLULAR LOCATION</scope>
</reference>
<reference evidence="16 17 18 19" key="12">
    <citation type="journal article" date="2024" name="Nat. Struct. Mol. Biol.">
        <title>Structural basis of the subcortical maternal complex and its implications in reproductive disorders.</title>
        <authorList>
            <person name="Chi P."/>
            <person name="Ou G."/>
            <person name="Qin D."/>
            <person name="Han Z."/>
            <person name="Li J."/>
            <person name="Xiao Q."/>
            <person name="Gao Z."/>
            <person name="Xu C."/>
            <person name="Qi Q."/>
            <person name="Liu Q."/>
            <person name="Liu S."/>
            <person name="Li J."/>
            <person name="Guo L."/>
            <person name="Lu Y."/>
            <person name="Chen J."/>
            <person name="Wang X."/>
            <person name="Shi H."/>
            <person name="Li L."/>
            <person name="Deng D."/>
        </authorList>
    </citation>
    <scope>STRUCTURE BY ELECTRON MICROSCOPY (2.78 ANGSTROMS) IN COMPLEX WITH NLRP5 AND TLE6</scope>
    <scope>IDENTIFICATION IN THE SCMC COMPLEX</scope>
    <scope>MUTAGENESIS OF ARG-32</scope>
</reference>
<comment type="function">
    <text evidence="2 3 5 6 7 8">Component of the subcortical maternal complex (SCMC), a multiprotein complex that plays a key role in early embryonic development (PubMed:18804437, PubMed:25208553, PubMed:37922900). The SCMC complex is a structural constituent of cytoplasmic lattices, which consist in fibrous structures found in the cytoplasm of oocytes and preimplantation embryos (PubMed:31575650, PubMed:37922900). They are required to store maternal proteins critical for embryonic development, such as proteins that control epigenetic reprogramming of the preimplantation embryo, and prevent their degradation or activation (PubMed:37922900). As part of the OOEP-KHDC3 scaffold, recruits BLM and TRIM25 to DNA replication forks, thereby promoting the ubiquitination of BLM by TRIM25, enhancing BLM retainment at replication forks and therefore promoting stalled replication fork restart (PubMed:29125140). Positively regulates the homologous recombination-mediated DNA double-strand break (DSB) repair pathway by regulating ATM activation and RAD51 recruitment to DSBs in oocytes (PubMed:29955025). Thereby contributes to oocyte survival and the resumption and completion of meiosis (PubMed:29955025).</text>
</comment>
<comment type="subunit">
    <text evidence="1 2 4 5 7 8 9">Component of the subcortical maternal complex (SCMC), at least composed of NLRP5, KHDC3, OOEP, and TLE6 (PubMed:18804437, PubMed:28992324, PubMed:37922900, PubMed:38177687). Within the complex, interacts with NLRP5, KHDC3 and TLE6 (PubMed:18804437, PubMed:31575650). The SCMC may facilitate translocation of its components between the nuclear and cytoplasmic compartments (By similarity). As part of the SCMC interacts with the SCMC-associated protein NLRP4F (PubMed:31575650). Forms a scaffold complex with KHDC3/FILIA, and interacts with BLM and TRIM25 at DNA replication forks (PubMed:29125140).</text>
</comment>
<comment type="subcellular location">
    <subcellularLocation>
        <location evidence="2 8">Cytoplasm</location>
    </subcellularLocation>
    <subcellularLocation>
        <location evidence="5">Nucleus</location>
    </subcellularLocation>
    <text evidence="2 3 8">Core component of cytoplasmic lattices in oocytes (PubMed:37922900). In the subcortical cytoplasm of early embryos from the 1-cell to the blastocyst stages (PubMed:18804437, PubMed:25208553). From the 2-cell stage, still detected in the subcortex, but excluded from cell-cell contact regions (PubMed:18804437). Expression largely disappears in blastocysts (PubMed:25208553).</text>
</comment>
<comment type="tissue specificity">
    <text evidence="2">Expressed in ovaries, where it is restricted to growing oocytes, with greatest levels in fully grown oocytes.</text>
</comment>
<comment type="developmental stage">
    <text evidence="2 7">Transcripts first detected at 15.5 dpc and peak 1 week after birth (PubMed:18804437). Transcripts accumulate during oogenesis (PubMed:18804437). During meiotic maturation, the vast majority of the transcripts are degraded and virtually none is detected by 2-cell stage embryogenesis (PubMed:18804437). The protein however persists during preimplantation up to the blastocyst stage (PubMed:18804437). At 2-cell stage, excluded from cell-cell contact regions (PubMed:18804437). Continuous exclusion from these regions during preimplantation development leads to the absence of the protein from the inner cells of the morula and the inner cell mass of the blastocyst (PubMed:18804437). Expressed in ovaries at postnatal day 2 (P2), expression peaks at P10, expression is then slightly decreased at P17 and further decreased at P21 (PubMed:31575650).</text>
</comment>
<comment type="induction">
    <text evidence="6">Induced by etoposide.</text>
</comment>
<comment type="domain">
    <text>Contains an atypical KH domain with amino acid changes at critical sites, suggesting that it may not bind RNA.</text>
</comment>
<comment type="disruption phenotype">
    <text evidence="2 3 4 6">Embryonic death at 2.5 dpc (PubMed:18804437). Progression from embryonic 1- to 2-cell stage delayed 6-8 hours. Less than 20% of the embryos progress beyond 2-cell stage (PubMed:18804437). Embryos form unequal sized blastomeres due to smaller, dysmorphic, and displaced mitotic spindles resulting in asymmetric division (PubMed:25208553). Decrease in thickness of subcortical F-actin in zygotes, thickening of F-actin bundles in the cytoplasm and loss of F-actin cytoplasmic lattices (PubMed:25208553). Decrease in CFL1/Cofilin-1 expression in the subcortex and diffused distribution in the cytoplasm of zygotes (PubMed:25208553). Decrease in expression of the SCMC component ZBED3 in oocytes (PubMed:28992324). Oocytes exhibit greater amounts of DNA damage and show an inability to repair DNA double strand breaks (PubMed:29955025). Increase in oocyte apoptosis upon treatment with the DNA cross-linking agent cisplatin (PubMed:29955025). Increased number of oocytes in primordial and primary follicles in 4 week old mice, however this number is decreased in 16 week old mice (PubMed:29955025). 4 hour delay in reaching 50% germinal vesicle breakdown (GVB) with a 20% decrease in the number of oocytes that complete GVB. 2 hour delay in reaching 50% polar body extrusion (PBE) with a decrease of 20% in the number of oocytes that complete PBE (PubMed:29955025).</text>
</comment>
<comment type="similarity">
    <text evidence="14">Belongs to the KHDC1 family.</text>
</comment>
<accession>Q9CWE6</accession>